<dbReference type="EC" id="3.3.2.9" evidence="2"/>
<dbReference type="EMBL" id="U89491">
    <property type="protein sequence ID" value="AAB49762.1"/>
    <property type="molecule type" value="mRNA"/>
</dbReference>
<dbReference type="EMBL" id="AK018249">
    <property type="protein sequence ID" value="BAB31132.1"/>
    <property type="molecule type" value="mRNA"/>
</dbReference>
<dbReference type="EMBL" id="CH466555">
    <property type="protein sequence ID" value="EDL13136.1"/>
    <property type="molecule type" value="Genomic_DNA"/>
</dbReference>
<dbReference type="EMBL" id="BC045194">
    <property type="protein sequence ID" value="AAH45194.1"/>
    <property type="molecule type" value="mRNA"/>
</dbReference>
<dbReference type="EMBL" id="BC061493">
    <property type="protein sequence ID" value="AAH61493.1"/>
    <property type="molecule type" value="mRNA"/>
</dbReference>
<dbReference type="CCDS" id="CCDS15579.1"/>
<dbReference type="RefSeq" id="NP_001299847.1">
    <property type="nucleotide sequence ID" value="NM_001312918.1"/>
</dbReference>
<dbReference type="RefSeq" id="NP_034275.1">
    <property type="nucleotide sequence ID" value="NM_010145.3"/>
</dbReference>
<dbReference type="SMR" id="Q9D379"/>
<dbReference type="BioGRID" id="199480">
    <property type="interactions" value="4"/>
</dbReference>
<dbReference type="FunCoup" id="Q9D379">
    <property type="interactions" value="678"/>
</dbReference>
<dbReference type="IntAct" id="Q9D379">
    <property type="interactions" value="5"/>
</dbReference>
<dbReference type="STRING" id="10090.ENSMUSP00000047551"/>
<dbReference type="BindingDB" id="Q9D379"/>
<dbReference type="ChEMBL" id="CHEMBL1075293"/>
<dbReference type="DrugCentral" id="Q9D379"/>
<dbReference type="ESTHER" id="mouse-EPHX1">
    <property type="family name" value="Epoxide_hydrolase"/>
</dbReference>
<dbReference type="MEROPS" id="S33.971"/>
<dbReference type="GlyGen" id="Q9D379">
    <property type="glycosylation" value="2 sites, 1 N-linked glycan (1 site), 1 O-linked glycan (1 site)"/>
</dbReference>
<dbReference type="iPTMnet" id="Q9D379"/>
<dbReference type="PhosphoSitePlus" id="Q9D379"/>
<dbReference type="SwissPalm" id="Q9D379"/>
<dbReference type="jPOST" id="Q9D379"/>
<dbReference type="PaxDb" id="10090-ENSMUSP00000047551"/>
<dbReference type="PeptideAtlas" id="Q9D379"/>
<dbReference type="ProteomicsDB" id="273295"/>
<dbReference type="Pumba" id="Q9D379"/>
<dbReference type="Antibodypedia" id="34646">
    <property type="antibodies" value="454 antibodies from 30 providers"/>
</dbReference>
<dbReference type="DNASU" id="13849"/>
<dbReference type="Ensembl" id="ENSMUST00000036928.12">
    <property type="protein sequence ID" value="ENSMUSP00000047551.6"/>
    <property type="gene ID" value="ENSMUSG00000038776.14"/>
</dbReference>
<dbReference type="GeneID" id="13849"/>
<dbReference type="KEGG" id="mmu:13849"/>
<dbReference type="UCSC" id="uc007dwz.1">
    <property type="organism name" value="mouse"/>
</dbReference>
<dbReference type="AGR" id="MGI:95405"/>
<dbReference type="CTD" id="2052"/>
<dbReference type="MGI" id="MGI:95405">
    <property type="gene designation" value="Ephx1"/>
</dbReference>
<dbReference type="VEuPathDB" id="HostDB:ENSMUSG00000038776"/>
<dbReference type="eggNOG" id="KOG2565">
    <property type="taxonomic scope" value="Eukaryota"/>
</dbReference>
<dbReference type="GeneTree" id="ENSGT00390000002210"/>
<dbReference type="InParanoid" id="Q9D379"/>
<dbReference type="OMA" id="EMANRPQ"/>
<dbReference type="OrthoDB" id="7130006at2759"/>
<dbReference type="PhylomeDB" id="Q9D379"/>
<dbReference type="TreeFam" id="TF313813"/>
<dbReference type="BRENDA" id="3.3.2.9">
    <property type="organism ID" value="3474"/>
</dbReference>
<dbReference type="Reactome" id="R-MMU-211945">
    <property type="pathway name" value="Phase I - Functionalization of compounds"/>
</dbReference>
<dbReference type="SABIO-RK" id="Q9D379"/>
<dbReference type="BioGRID-ORCS" id="13849">
    <property type="hits" value="0 hits in 77 CRISPR screens"/>
</dbReference>
<dbReference type="ChiTaRS" id="Ephx1">
    <property type="organism name" value="mouse"/>
</dbReference>
<dbReference type="PRO" id="PR:Q9D379"/>
<dbReference type="Proteomes" id="UP000000589">
    <property type="component" value="Chromosome 1"/>
</dbReference>
<dbReference type="RNAct" id="Q9D379">
    <property type="molecule type" value="protein"/>
</dbReference>
<dbReference type="Bgee" id="ENSMUSG00000038776">
    <property type="expression patterns" value="Expressed in choroid plexus of fourth ventricle and 218 other cell types or tissues"/>
</dbReference>
<dbReference type="ExpressionAtlas" id="Q9D379">
    <property type="expression patterns" value="baseline and differential"/>
</dbReference>
<dbReference type="GO" id="GO:0005789">
    <property type="term" value="C:endoplasmic reticulum membrane"/>
    <property type="evidence" value="ECO:0007669"/>
    <property type="project" value="UniProtKB-SubCell"/>
</dbReference>
<dbReference type="GO" id="GO:0033961">
    <property type="term" value="F:cis-stilbene-oxide hydrolase activity"/>
    <property type="evidence" value="ECO:0000250"/>
    <property type="project" value="UniProtKB"/>
</dbReference>
<dbReference type="GO" id="GO:0019899">
    <property type="term" value="F:enzyme binding"/>
    <property type="evidence" value="ECO:0007669"/>
    <property type="project" value="Ensembl"/>
</dbReference>
<dbReference type="GO" id="GO:0004301">
    <property type="term" value="F:epoxide hydrolase activity"/>
    <property type="evidence" value="ECO:0000250"/>
    <property type="project" value="UniProtKB"/>
</dbReference>
<dbReference type="GO" id="GO:0008142">
    <property type="term" value="F:oxysterol binding"/>
    <property type="evidence" value="ECO:0000315"/>
    <property type="project" value="UniProtKB"/>
</dbReference>
<dbReference type="GO" id="GO:0019369">
    <property type="term" value="P:arachidonate metabolic process"/>
    <property type="evidence" value="ECO:0000250"/>
    <property type="project" value="UniProtKB"/>
</dbReference>
<dbReference type="GO" id="GO:0071385">
    <property type="term" value="P:cellular response to glucocorticoid stimulus"/>
    <property type="evidence" value="ECO:0007669"/>
    <property type="project" value="Ensembl"/>
</dbReference>
<dbReference type="GO" id="GO:0034312">
    <property type="term" value="P:diol biosynthetic process"/>
    <property type="evidence" value="ECO:0007669"/>
    <property type="project" value="Ensembl"/>
</dbReference>
<dbReference type="GO" id="GO:0097176">
    <property type="term" value="P:epoxide metabolic process"/>
    <property type="evidence" value="ECO:0007669"/>
    <property type="project" value="Ensembl"/>
</dbReference>
<dbReference type="GO" id="GO:0120253">
    <property type="term" value="P:hydrocarbon catabolic process"/>
    <property type="evidence" value="ECO:0000315"/>
    <property type="project" value="MGI"/>
</dbReference>
<dbReference type="GO" id="GO:0001889">
    <property type="term" value="P:liver development"/>
    <property type="evidence" value="ECO:0007669"/>
    <property type="project" value="Ensembl"/>
</dbReference>
<dbReference type="GO" id="GO:0009636">
    <property type="term" value="P:response to toxic substance"/>
    <property type="evidence" value="ECO:0007669"/>
    <property type="project" value="UniProtKB-KW"/>
</dbReference>
<dbReference type="FunFam" id="3.40.50.1820:FF:000172">
    <property type="entry name" value="Epoxide hydrolase"/>
    <property type="match status" value="1"/>
</dbReference>
<dbReference type="Gene3D" id="3.40.50.1820">
    <property type="entry name" value="alpha/beta hydrolase"/>
    <property type="match status" value="1"/>
</dbReference>
<dbReference type="InterPro" id="IPR029058">
    <property type="entry name" value="AB_hydrolase_fold"/>
</dbReference>
<dbReference type="InterPro" id="IPR000639">
    <property type="entry name" value="Epox_hydrolase-like"/>
</dbReference>
<dbReference type="InterPro" id="IPR010497">
    <property type="entry name" value="Epoxide_hydro_N"/>
</dbReference>
<dbReference type="InterPro" id="IPR016292">
    <property type="entry name" value="Epoxide_hydrolase"/>
</dbReference>
<dbReference type="PANTHER" id="PTHR21661:SF78">
    <property type="entry name" value="EPOXIDE HYDROLASE 1"/>
    <property type="match status" value="1"/>
</dbReference>
<dbReference type="PANTHER" id="PTHR21661">
    <property type="entry name" value="EPOXIDE HYDROLASE 1-RELATED"/>
    <property type="match status" value="1"/>
</dbReference>
<dbReference type="Pfam" id="PF06441">
    <property type="entry name" value="EHN"/>
    <property type="match status" value="1"/>
</dbReference>
<dbReference type="PIRSF" id="PIRSF001112">
    <property type="entry name" value="Epoxide_hydrolase"/>
    <property type="match status" value="1"/>
</dbReference>
<dbReference type="PRINTS" id="PR00412">
    <property type="entry name" value="EPOXHYDRLASE"/>
</dbReference>
<dbReference type="SUPFAM" id="SSF53474">
    <property type="entry name" value="alpha/beta-Hydrolases"/>
    <property type="match status" value="1"/>
</dbReference>
<sequence length="455" mass="52577">MWLELILASVLGFVIYWFVSRDKEETLPLEDGWWGPGSKPSAKEDESIRPFKVETSDEEIKDLHQRIDRFRASPPLEGSRFHYGFNSSYLKKVVSFWRNEFDWRKQVEILNQYPHFKTKIEGLDIHFIHVKPPQLPSGRTPKPLLMVHGWPGSFYEFYKIIPLLTDPKTHGLSDEHVFEVICPSIPGYGFSEASSKKGLNSVATARIFYKLMSRLGFQKFYIQGGDWGSLICTNIAQMVPNHVKGLHLNMSFISRNIYSLTPLLGQRFGRFLGYTEKDLELLYPFKEKVFYNIMRESGYLHIQATKPDTVGCALNDSPVGLAAYILEKFSTWTKSEYRELEDGGLERKFSLEDLLTNIMIYWTTGTIVSSQRFYKENLGQGVMVHRHEGMKVFVPTGYSAFPSEILHAPEKWVKVKYPKLISYSYMERGGHFAAFEEPKLLAQDIRKFVSLAELQ</sequence>
<protein>
    <recommendedName>
        <fullName evidence="6">Epoxide hydrolase 1</fullName>
        <ecNumber evidence="2">3.3.2.9</ecNumber>
    </recommendedName>
    <alternativeName>
        <fullName>Epoxide hydratase</fullName>
    </alternativeName>
    <alternativeName>
        <fullName>Microsomal epoxide hydrolase</fullName>
        <shortName evidence="6">mEH</shortName>
    </alternativeName>
</protein>
<organism>
    <name type="scientific">Mus musculus</name>
    <name type="common">Mouse</name>
    <dbReference type="NCBI Taxonomy" id="10090"/>
    <lineage>
        <taxon>Eukaryota</taxon>
        <taxon>Metazoa</taxon>
        <taxon>Chordata</taxon>
        <taxon>Craniata</taxon>
        <taxon>Vertebrata</taxon>
        <taxon>Euteleostomi</taxon>
        <taxon>Mammalia</taxon>
        <taxon>Eutheria</taxon>
        <taxon>Euarchontoglires</taxon>
        <taxon>Glires</taxon>
        <taxon>Rodentia</taxon>
        <taxon>Myomorpha</taxon>
        <taxon>Muroidea</taxon>
        <taxon>Muridae</taxon>
        <taxon>Murinae</taxon>
        <taxon>Mus</taxon>
        <taxon>Mus</taxon>
    </lineage>
</organism>
<comment type="function">
    <text evidence="1 2 5">Biotransformation enzyme that catalyzes the hydrolysis of arene and aliphatic epoxides to less reactive and more water soluble dihydrodiols by the trans addition of water. May play a role in the metabolism of endogenous lipids such as epoxide-containing fatty acids. Metabolizes the abundant endocannabinoid 2-arachidonoylglycerol (2-AG) to free arachidonic acid (AA) and glycerol (By similarity). Binds 20(S)-hydroxycholesterol (20(S)-OHC) (PubMed:34799735).</text>
</comment>
<comment type="catalytic activity">
    <reaction evidence="1 2">
        <text>cis-stilbene oxide + H2O = (1R,2R)-hydrobenzoin</text>
        <dbReference type="Rhea" id="RHEA:23900"/>
        <dbReference type="ChEBI" id="CHEBI:15377"/>
        <dbReference type="ChEBI" id="CHEBI:50004"/>
        <dbReference type="ChEBI" id="CHEBI:50014"/>
        <dbReference type="EC" id="3.3.2.9"/>
    </reaction>
    <physiologicalReaction direction="left-to-right" evidence="1">
        <dbReference type="Rhea" id="RHEA:23901"/>
    </physiologicalReaction>
</comment>
<comment type="catalytic activity">
    <reaction evidence="2">
        <text>1-(4-methoxyphenyl)-N-methyl-N-[(3-methyloxetan-3-yl)methyl]methanamine + H2O = 2-{[(4-methoxybenzyl)(methyl)amino]methyl}-2-methylpropane-1,3-diol</text>
        <dbReference type="Rhea" id="RHEA:55764"/>
        <dbReference type="ChEBI" id="CHEBI:15377"/>
        <dbReference type="ChEBI" id="CHEBI:139161"/>
        <dbReference type="ChEBI" id="CHEBI:139164"/>
        <dbReference type="EC" id="3.3.2.9"/>
    </reaction>
</comment>
<comment type="catalytic activity">
    <reaction evidence="1">
        <text>8,9-epoxy-(5Z,11Z,14Z)-eicosatrienoate + H2O = 8,9-dihydroxy-(5Z,11Z,14Z)-eicosatrienoate</text>
        <dbReference type="Rhea" id="RHEA:44048"/>
        <dbReference type="ChEBI" id="CHEBI:15377"/>
        <dbReference type="ChEBI" id="CHEBI:84025"/>
        <dbReference type="ChEBI" id="CHEBI:84032"/>
    </reaction>
    <physiologicalReaction direction="left-to-right" evidence="1">
        <dbReference type="Rhea" id="RHEA:44049"/>
    </physiologicalReaction>
</comment>
<comment type="catalytic activity">
    <reaction evidence="1">
        <text>11,12-epoxy-(5Z,8Z,14Z)-eicosatrienoate + H2O = 11,12-dihydroxy-(5Z,8Z,14Z)-eicosatrienoate</text>
        <dbReference type="Rhea" id="RHEA:44044"/>
        <dbReference type="ChEBI" id="CHEBI:15377"/>
        <dbReference type="ChEBI" id="CHEBI:76625"/>
        <dbReference type="ChEBI" id="CHEBI:84031"/>
    </reaction>
    <physiologicalReaction direction="left-to-right" evidence="1">
        <dbReference type="Rhea" id="RHEA:44045"/>
    </physiologicalReaction>
</comment>
<comment type="catalytic activity">
    <reaction evidence="1">
        <text>2-(5Z,8Z,11Z,14Z-eicosatetraenoyl)-glycerol + H2O = glycerol + (5Z,8Z,11Z,14Z)-eicosatetraenoate + H(+)</text>
        <dbReference type="Rhea" id="RHEA:26132"/>
        <dbReference type="ChEBI" id="CHEBI:15377"/>
        <dbReference type="ChEBI" id="CHEBI:15378"/>
        <dbReference type="ChEBI" id="CHEBI:17754"/>
        <dbReference type="ChEBI" id="CHEBI:32395"/>
        <dbReference type="ChEBI" id="CHEBI:52392"/>
    </reaction>
    <physiologicalReaction direction="left-to-right" evidence="1">
        <dbReference type="Rhea" id="RHEA:26133"/>
    </physiologicalReaction>
</comment>
<comment type="activity regulation">
    <text evidence="1">Inhibited by 10-hydroxystearamide and methoxy-arachidonyl fluorophosphate.</text>
</comment>
<comment type="subcellular location">
    <subcellularLocation>
        <location evidence="2">Microsome membrane</location>
        <topology evidence="2">Single-pass type III membrane protein</topology>
    </subcellularLocation>
    <subcellularLocation>
        <location evidence="2">Endoplasmic reticulum membrane</location>
        <topology evidence="2">Single-pass type III membrane protein</topology>
    </subcellularLocation>
</comment>
<comment type="similarity">
    <text evidence="6">Belongs to the peptidase S33 family.</text>
</comment>
<evidence type="ECO:0000250" key="1">
    <source>
        <dbReference type="UniProtKB" id="P07099"/>
    </source>
</evidence>
<evidence type="ECO:0000250" key="2">
    <source>
        <dbReference type="UniProtKB" id="P07687"/>
    </source>
</evidence>
<evidence type="ECO:0000250" key="3">
    <source>
        <dbReference type="UniProtKB" id="P34913"/>
    </source>
</evidence>
<evidence type="ECO:0000255" key="4"/>
<evidence type="ECO:0000269" key="5">
    <source>
    </source>
</evidence>
<evidence type="ECO:0000305" key="6"/>
<evidence type="ECO:0000312" key="7">
    <source>
        <dbReference type="MGI" id="MGI:95405"/>
    </source>
</evidence>
<evidence type="ECO:0007744" key="8">
    <source>
    </source>
</evidence>
<feature type="chain" id="PRO_0000080856" description="Epoxide hydrolase 1">
    <location>
        <begin position="1"/>
        <end position="455"/>
    </location>
</feature>
<feature type="transmembrane region" description="Helical; Signal-anchor for type III membrane protein" evidence="4">
    <location>
        <begin position="1"/>
        <end position="21"/>
    </location>
</feature>
<feature type="topological domain" description="Cytoplasmic" evidence="2">
    <location>
        <begin position="22"/>
        <end position="455"/>
    </location>
</feature>
<feature type="active site" description="Nucleophile" evidence="2">
    <location>
        <position position="226"/>
    </location>
</feature>
<feature type="active site" description="Proton donor" evidence="3">
    <location>
        <position position="374"/>
    </location>
</feature>
<feature type="active site" description="Proton acceptor" evidence="2">
    <location>
        <position position="431"/>
    </location>
</feature>
<feature type="modified residue" description="Dimethylated arginine" evidence="2">
    <location>
        <position position="295"/>
    </location>
</feature>
<feature type="modified residue" description="N6-acetyllysine" evidence="8">
    <location>
        <position position="439"/>
    </location>
</feature>
<feature type="sequence conflict" description="In Ref. 2; BAB31132." evidence="6" ref="2">
    <original>E</original>
    <variation>K</variation>
    <location>
        <position position="410"/>
    </location>
</feature>
<accession>Q9D379</accession>
<accession>P97869</accession>
<name>HYEP_MOUSE</name>
<proteinExistence type="evidence at protein level"/>
<gene>
    <name evidence="7" type="primary">Ephx1</name>
</gene>
<keyword id="KW-0007">Acetylation</keyword>
<keyword id="KW-0058">Aromatic hydrocarbons catabolism</keyword>
<keyword id="KW-0216">Detoxification</keyword>
<keyword id="KW-0903">Direct protein sequencing</keyword>
<keyword id="KW-0256">Endoplasmic reticulum</keyword>
<keyword id="KW-0378">Hydrolase</keyword>
<keyword id="KW-0443">Lipid metabolism</keyword>
<keyword id="KW-0472">Membrane</keyword>
<keyword id="KW-0488">Methylation</keyword>
<keyword id="KW-0492">Microsome</keyword>
<keyword id="KW-1185">Reference proteome</keyword>
<keyword id="KW-0812">Transmembrane</keyword>
<keyword id="KW-1133">Transmembrane helix</keyword>
<reference key="1">
    <citation type="journal article" date="2000" name="Mamm. Genome">
        <title>The Ephx1(d) allele encoding an Arg338Cys substitution is associated with heat lability.</title>
        <authorList>
            <person name="Hartsfield J.K. Jr."/>
            <person name="Everett E.T."/>
        </authorList>
    </citation>
    <scope>NUCLEOTIDE SEQUENCE [MRNA]</scope>
    <source>
        <strain>C57BL/6J</strain>
        <tissue>Liver</tissue>
    </source>
</reference>
<reference key="2">
    <citation type="journal article" date="2005" name="Science">
        <title>The transcriptional landscape of the mammalian genome.</title>
        <authorList>
            <person name="Carninci P."/>
            <person name="Kasukawa T."/>
            <person name="Katayama S."/>
            <person name="Gough J."/>
            <person name="Frith M.C."/>
            <person name="Maeda N."/>
            <person name="Oyama R."/>
            <person name="Ravasi T."/>
            <person name="Lenhard B."/>
            <person name="Wells C."/>
            <person name="Kodzius R."/>
            <person name="Shimokawa K."/>
            <person name="Bajic V.B."/>
            <person name="Brenner S.E."/>
            <person name="Batalov S."/>
            <person name="Forrest A.R."/>
            <person name="Zavolan M."/>
            <person name="Davis M.J."/>
            <person name="Wilming L.G."/>
            <person name="Aidinis V."/>
            <person name="Allen J.E."/>
            <person name="Ambesi-Impiombato A."/>
            <person name="Apweiler R."/>
            <person name="Aturaliya R.N."/>
            <person name="Bailey T.L."/>
            <person name="Bansal M."/>
            <person name="Baxter L."/>
            <person name="Beisel K.W."/>
            <person name="Bersano T."/>
            <person name="Bono H."/>
            <person name="Chalk A.M."/>
            <person name="Chiu K.P."/>
            <person name="Choudhary V."/>
            <person name="Christoffels A."/>
            <person name="Clutterbuck D.R."/>
            <person name="Crowe M.L."/>
            <person name="Dalla E."/>
            <person name="Dalrymple B.P."/>
            <person name="de Bono B."/>
            <person name="Della Gatta G."/>
            <person name="di Bernardo D."/>
            <person name="Down T."/>
            <person name="Engstrom P."/>
            <person name="Fagiolini M."/>
            <person name="Faulkner G."/>
            <person name="Fletcher C.F."/>
            <person name="Fukushima T."/>
            <person name="Furuno M."/>
            <person name="Futaki S."/>
            <person name="Gariboldi M."/>
            <person name="Georgii-Hemming P."/>
            <person name="Gingeras T.R."/>
            <person name="Gojobori T."/>
            <person name="Green R.E."/>
            <person name="Gustincich S."/>
            <person name="Harbers M."/>
            <person name="Hayashi Y."/>
            <person name="Hensch T.K."/>
            <person name="Hirokawa N."/>
            <person name="Hill D."/>
            <person name="Huminiecki L."/>
            <person name="Iacono M."/>
            <person name="Ikeo K."/>
            <person name="Iwama A."/>
            <person name="Ishikawa T."/>
            <person name="Jakt M."/>
            <person name="Kanapin A."/>
            <person name="Katoh M."/>
            <person name="Kawasawa Y."/>
            <person name="Kelso J."/>
            <person name="Kitamura H."/>
            <person name="Kitano H."/>
            <person name="Kollias G."/>
            <person name="Krishnan S.P."/>
            <person name="Kruger A."/>
            <person name="Kummerfeld S.K."/>
            <person name="Kurochkin I.V."/>
            <person name="Lareau L.F."/>
            <person name="Lazarevic D."/>
            <person name="Lipovich L."/>
            <person name="Liu J."/>
            <person name="Liuni S."/>
            <person name="McWilliam S."/>
            <person name="Madan Babu M."/>
            <person name="Madera M."/>
            <person name="Marchionni L."/>
            <person name="Matsuda H."/>
            <person name="Matsuzawa S."/>
            <person name="Miki H."/>
            <person name="Mignone F."/>
            <person name="Miyake S."/>
            <person name="Morris K."/>
            <person name="Mottagui-Tabar S."/>
            <person name="Mulder N."/>
            <person name="Nakano N."/>
            <person name="Nakauchi H."/>
            <person name="Ng P."/>
            <person name="Nilsson R."/>
            <person name="Nishiguchi S."/>
            <person name="Nishikawa S."/>
            <person name="Nori F."/>
            <person name="Ohara O."/>
            <person name="Okazaki Y."/>
            <person name="Orlando V."/>
            <person name="Pang K.C."/>
            <person name="Pavan W.J."/>
            <person name="Pavesi G."/>
            <person name="Pesole G."/>
            <person name="Petrovsky N."/>
            <person name="Piazza S."/>
            <person name="Reed J."/>
            <person name="Reid J.F."/>
            <person name="Ring B.Z."/>
            <person name="Ringwald M."/>
            <person name="Rost B."/>
            <person name="Ruan Y."/>
            <person name="Salzberg S.L."/>
            <person name="Sandelin A."/>
            <person name="Schneider C."/>
            <person name="Schoenbach C."/>
            <person name="Sekiguchi K."/>
            <person name="Semple C.A."/>
            <person name="Seno S."/>
            <person name="Sessa L."/>
            <person name="Sheng Y."/>
            <person name="Shibata Y."/>
            <person name="Shimada H."/>
            <person name="Shimada K."/>
            <person name="Silva D."/>
            <person name="Sinclair B."/>
            <person name="Sperling S."/>
            <person name="Stupka E."/>
            <person name="Sugiura K."/>
            <person name="Sultana R."/>
            <person name="Takenaka Y."/>
            <person name="Taki K."/>
            <person name="Tammoja K."/>
            <person name="Tan S.L."/>
            <person name="Tang S."/>
            <person name="Taylor M.S."/>
            <person name="Tegner J."/>
            <person name="Teichmann S.A."/>
            <person name="Ueda H.R."/>
            <person name="van Nimwegen E."/>
            <person name="Verardo R."/>
            <person name="Wei C.L."/>
            <person name="Yagi K."/>
            <person name="Yamanishi H."/>
            <person name="Zabarovsky E."/>
            <person name="Zhu S."/>
            <person name="Zimmer A."/>
            <person name="Hide W."/>
            <person name="Bult C."/>
            <person name="Grimmond S.M."/>
            <person name="Teasdale R.D."/>
            <person name="Liu E.T."/>
            <person name="Brusic V."/>
            <person name="Quackenbush J."/>
            <person name="Wahlestedt C."/>
            <person name="Mattick J.S."/>
            <person name="Hume D.A."/>
            <person name="Kai C."/>
            <person name="Sasaki D."/>
            <person name="Tomaru Y."/>
            <person name="Fukuda S."/>
            <person name="Kanamori-Katayama M."/>
            <person name="Suzuki M."/>
            <person name="Aoki J."/>
            <person name="Arakawa T."/>
            <person name="Iida J."/>
            <person name="Imamura K."/>
            <person name="Itoh M."/>
            <person name="Kato T."/>
            <person name="Kawaji H."/>
            <person name="Kawagashira N."/>
            <person name="Kawashima T."/>
            <person name="Kojima M."/>
            <person name="Kondo S."/>
            <person name="Konno H."/>
            <person name="Nakano K."/>
            <person name="Ninomiya N."/>
            <person name="Nishio T."/>
            <person name="Okada M."/>
            <person name="Plessy C."/>
            <person name="Shibata K."/>
            <person name="Shiraki T."/>
            <person name="Suzuki S."/>
            <person name="Tagami M."/>
            <person name="Waki K."/>
            <person name="Watahiki A."/>
            <person name="Okamura-Oho Y."/>
            <person name="Suzuki H."/>
            <person name="Kawai J."/>
            <person name="Hayashizaki Y."/>
        </authorList>
    </citation>
    <scope>NUCLEOTIDE SEQUENCE [LARGE SCALE MRNA]</scope>
    <source>
        <strain>C57BL/6J</strain>
        <tissue>Medulla oblongata</tissue>
    </source>
</reference>
<reference key="3">
    <citation type="submission" date="2005-07" db="EMBL/GenBank/DDBJ databases">
        <authorList>
            <person name="Mural R.J."/>
            <person name="Adams M.D."/>
            <person name="Myers E.W."/>
            <person name="Smith H.O."/>
            <person name="Venter J.C."/>
        </authorList>
    </citation>
    <scope>NUCLEOTIDE SEQUENCE [LARGE SCALE GENOMIC DNA]</scope>
</reference>
<reference key="4">
    <citation type="journal article" date="2004" name="Genome Res.">
        <title>The status, quality, and expansion of the NIH full-length cDNA project: the Mammalian Gene Collection (MGC).</title>
        <authorList>
            <consortium name="The MGC Project Team"/>
        </authorList>
    </citation>
    <scope>NUCLEOTIDE SEQUENCE [LARGE SCALE MRNA]</scope>
    <source>
        <strain>FVB/N</strain>
        <tissue>Colon</tissue>
        <tissue>Mammary tumor</tissue>
    </source>
</reference>
<reference key="5">
    <citation type="submission" date="2007-04" db="UniProtKB">
        <authorList>
            <person name="Lubec G."/>
            <person name="Kang S.U."/>
        </authorList>
    </citation>
    <scope>PROTEIN SEQUENCE OF 339-347</scope>
    <scope>IDENTIFICATION BY MASS SPECTROMETRY</scope>
    <source>
        <strain>C57BL/6J</strain>
        <tissue>Brain</tissue>
    </source>
</reference>
<reference key="6">
    <citation type="journal article" date="2010" name="Cell">
        <title>A tissue-specific atlas of mouse protein phosphorylation and expression.</title>
        <authorList>
            <person name="Huttlin E.L."/>
            <person name="Jedrychowski M.P."/>
            <person name="Elias J.E."/>
            <person name="Goswami T."/>
            <person name="Rad R."/>
            <person name="Beausoleil S.A."/>
            <person name="Villen J."/>
            <person name="Haas W."/>
            <person name="Sowa M.E."/>
            <person name="Gygi S.P."/>
        </authorList>
    </citation>
    <scope>IDENTIFICATION BY MASS SPECTROMETRY [LARGE SCALE ANALYSIS]</scope>
    <source>
        <tissue>Brain</tissue>
        <tissue>Heart</tissue>
        <tissue>Kidney</tissue>
        <tissue>Liver</tissue>
        <tissue>Lung</tissue>
        <tissue>Pancreas</tissue>
        <tissue>Spleen</tissue>
        <tissue>Testis</tissue>
    </source>
</reference>
<reference key="7">
    <citation type="journal article" date="2013" name="Proc. Natl. Acad. Sci. U.S.A.">
        <title>Label-free quantitative proteomics of the lysine acetylome in mitochondria identifies substrates of SIRT3 in metabolic pathways.</title>
        <authorList>
            <person name="Rardin M.J."/>
            <person name="Newman J.C."/>
            <person name="Held J.M."/>
            <person name="Cusack M.P."/>
            <person name="Sorensen D.J."/>
            <person name="Li B."/>
            <person name="Schilling B."/>
            <person name="Mooney S.D."/>
            <person name="Kahn C.R."/>
            <person name="Verdin E."/>
            <person name="Gibson B.W."/>
        </authorList>
    </citation>
    <scope>ACETYLATION [LARGE SCALE ANALYSIS] AT LYS-439</scope>
    <scope>IDENTIFICATION BY MASS SPECTROMETRY [LARGE SCALE ANALYSIS]</scope>
    <source>
        <tissue>Liver</tissue>
    </source>
</reference>
<reference key="8">
    <citation type="journal article" date="2021" name="Nat. Chem. Biol.">
        <title>A proteome-wide map of 20(S)-hydroxycholesterol interactors in cell membranes.</title>
        <authorList>
            <person name="Cheng Y.S."/>
            <person name="Zhang T."/>
            <person name="Ma X."/>
            <person name="Pratuangtham S."/>
            <person name="Zhang G.C."/>
            <person name="Ondrus A.A."/>
            <person name="Mafi A."/>
            <person name="Lomenick B."/>
            <person name="Jones J.J."/>
            <person name="Ondrus A.E."/>
        </authorList>
    </citation>
    <scope>FUNCTION</scope>
</reference>